<name>VG23_ICHVA</name>
<protein>
    <recommendedName>
        <fullName>Uncharacterized protein ORF23</fullName>
    </recommendedName>
</protein>
<organism>
    <name type="scientific">Ictalurid herpesvirus 1 (strain Auburn)</name>
    <name type="common">IcHV-1</name>
    <name type="synonym">Channel catfish herpesvirus</name>
    <dbReference type="NCBI Taxonomy" id="766178"/>
    <lineage>
        <taxon>Viruses</taxon>
        <taxon>Duplodnaviria</taxon>
        <taxon>Heunggongvirae</taxon>
        <taxon>Peploviricota</taxon>
        <taxon>Herviviricetes</taxon>
        <taxon>Herpesvirales</taxon>
        <taxon>Alloherpesviridae</taxon>
        <taxon>Ictavirus</taxon>
        <taxon>Ictavirus ictaluridallo1</taxon>
        <taxon>Ictalurid herpesvirus 1</taxon>
    </lineage>
</organism>
<proteinExistence type="predicted"/>
<dbReference type="EMBL" id="M75136">
    <property type="protein sequence ID" value="AAA88126.1"/>
    <property type="molecule type" value="Genomic_DNA"/>
</dbReference>
<dbReference type="PIR" id="F36788">
    <property type="entry name" value="F36788"/>
</dbReference>
<dbReference type="RefSeq" id="NP_041114.1">
    <property type="nucleotide sequence ID" value="NC_001493.2"/>
</dbReference>
<dbReference type="GeneID" id="1488403"/>
<dbReference type="KEGG" id="vg:1488403"/>
<dbReference type="Proteomes" id="UP000007643">
    <property type="component" value="Segment"/>
</dbReference>
<accession>Q00127</accession>
<sequence length="418" mass="45957">MYIRINESRGESTSLDNRLISASRVPSVSSSARFLSTCAESSRLRVSTSLRSSSRSLFASVNSREIAAVPFVYTIAGMEDVIITLGIDDTVYFLEWAILSINDVLSLIKRPGVKFTTVDTSNTSTVTIAVPATMDPMERLFVWTEGYHGVFMDDLRKGATYEWLCVLASTAGVLSPMDPPMPSLLDRFTDSDELEIFVHLGRNIEINGATALWDRTVRYAFVPPSIELRFKNVWNAILKGGGDPRSVMDRDAVTVCSTVGADALVVLPRGDGDDEVPVVAVRNADRYLEELSERSTNRTVTEILAAPTPPFPIPNFGIGVLTDRVKGLCEVFIIIKDSDRWMFDRYTFALNTCMIGNVISNGLGIYETTLAGLERTLQPPAPTSRPRFVCVVRDGSHTEAGQPVGALGKCQAKPRNLW</sequence>
<gene>
    <name type="primary">ORF23</name>
</gene>
<reference key="1">
    <citation type="journal article" date="1992" name="Virology">
        <title>Channel catfish virus: a new type of herpesvirus.</title>
        <authorList>
            <person name="Davison A.J."/>
        </authorList>
    </citation>
    <scope>NUCLEOTIDE SEQUENCE [LARGE SCALE GENOMIC DNA]</scope>
</reference>
<organismHost>
    <name type="scientific">Ictaluridae</name>
    <name type="common">bullhead catfishes</name>
    <dbReference type="NCBI Taxonomy" id="7996"/>
</organismHost>
<feature type="chain" id="PRO_0000222106" description="Uncharacterized protein ORF23">
    <location>
        <begin position="1"/>
        <end position="418"/>
    </location>
</feature>
<keyword id="KW-1185">Reference proteome</keyword>